<comment type="function">
    <text evidence="2">Binds reversibly and blocks P/Q-type voltage-gated calcium channels (Cav).</text>
</comment>
<comment type="subcellular location">
    <subcellularLocation>
        <location evidence="6">Secreted</location>
    </subcellularLocation>
</comment>
<comment type="tissue specificity">
    <text evidence="6">Expressed by the venom gland.</text>
</comment>
<comment type="domain">
    <text evidence="5">The presence of a 'disulfide through disulfide knot' structurally defines this protein as a knottin.</text>
</comment>
<comment type="similarity">
    <text evidence="5">Belongs to the venom Ptu1-like knottin family.</text>
</comment>
<protein>
    <recommendedName>
        <fullName evidence="4">U-reduvitoxin-Pr3a</fullName>
        <shortName evidence="4">U-RDTX-Pr3a</shortName>
    </recommendedName>
</protein>
<evidence type="ECO:0000250" key="1">
    <source>
        <dbReference type="UniProtKB" id="P58606"/>
    </source>
</evidence>
<evidence type="ECO:0000250" key="2">
    <source>
        <dbReference type="UniProtKB" id="P58608"/>
    </source>
</evidence>
<evidence type="ECO:0000255" key="3"/>
<evidence type="ECO:0000303" key="4">
    <source>
    </source>
</evidence>
<evidence type="ECO:0000305" key="5"/>
<evidence type="ECO:0000305" key="6">
    <source>
    </source>
</evidence>
<organism>
    <name type="scientific">Platymeris rhadamanthus</name>
    <name type="common">Red spot assassin bug</name>
    <dbReference type="NCBI Taxonomy" id="1134088"/>
    <lineage>
        <taxon>Eukaryota</taxon>
        <taxon>Metazoa</taxon>
        <taxon>Ecdysozoa</taxon>
        <taxon>Arthropoda</taxon>
        <taxon>Hexapoda</taxon>
        <taxon>Insecta</taxon>
        <taxon>Pterygota</taxon>
        <taxon>Neoptera</taxon>
        <taxon>Paraneoptera</taxon>
        <taxon>Hemiptera</taxon>
        <taxon>Heteroptera</taxon>
        <taxon>Panheteroptera</taxon>
        <taxon>Cimicomorpha</taxon>
        <taxon>Reduviidae</taxon>
        <taxon>Platymeris</taxon>
    </lineage>
</organism>
<feature type="signal peptide" evidence="3">
    <location>
        <begin position="1"/>
        <end position="22"/>
    </location>
</feature>
<feature type="chain" id="PRO_5025606948" description="U-reduvitoxin-Pr3a" evidence="5">
    <location>
        <begin position="23"/>
        <end position="68"/>
    </location>
</feature>
<feature type="disulfide bond" evidence="1">
    <location>
        <begin position="29"/>
        <end position="47"/>
    </location>
</feature>
<feature type="disulfide bond" evidence="1">
    <location>
        <begin position="36"/>
        <end position="52"/>
    </location>
</feature>
<feature type="disulfide bond" evidence="1">
    <location>
        <begin position="46"/>
        <end position="59"/>
    </location>
</feature>
<reference key="1">
    <citation type="journal article" date="2019" name="Toxins">
        <title>Missiles of mass disruption: composition and glandular origin of venom used as a projectile defensive weapon by the assassin bug Platymeris rhadamanthus.</title>
        <authorList>
            <person name="Walker A.A."/>
            <person name="Robinson S.D."/>
            <person name="Undheim E.A.B."/>
            <person name="Jin J."/>
            <person name="Han X."/>
            <person name="Fry B.G."/>
            <person name="Vetter I."/>
            <person name="King G.F."/>
        </authorList>
    </citation>
    <scope>NUCLEOTIDE SEQUENCE [MRNA]</scope>
    <source>
        <tissue>Venom gland</tissue>
    </source>
</reference>
<name>PLK3A_PLARH</name>
<proteinExistence type="inferred from homology"/>
<accession>A0A6B9KZ66</accession>
<keyword id="KW-0108">Calcium channel impairing toxin</keyword>
<keyword id="KW-1015">Disulfide bond</keyword>
<keyword id="KW-0872">Ion channel impairing toxin</keyword>
<keyword id="KW-0960">Knottin</keyword>
<keyword id="KW-0528">Neurotoxin</keyword>
<keyword id="KW-0964">Secreted</keyword>
<keyword id="KW-0732">Signal</keyword>
<keyword id="KW-0800">Toxin</keyword>
<keyword id="KW-1218">Voltage-gated calcium channel impairing toxin</keyword>
<dbReference type="EMBL" id="MN208347">
    <property type="protein sequence ID" value="QHB21536.1"/>
    <property type="molecule type" value="mRNA"/>
</dbReference>
<dbReference type="SMR" id="A0A6B9KZ66"/>
<dbReference type="GO" id="GO:0005576">
    <property type="term" value="C:extracellular region"/>
    <property type="evidence" value="ECO:0007669"/>
    <property type="project" value="UniProtKB-SubCell"/>
</dbReference>
<dbReference type="GO" id="GO:0005246">
    <property type="term" value="F:calcium channel regulator activity"/>
    <property type="evidence" value="ECO:0007669"/>
    <property type="project" value="UniProtKB-KW"/>
</dbReference>
<dbReference type="GO" id="GO:0090729">
    <property type="term" value="F:toxin activity"/>
    <property type="evidence" value="ECO:0007669"/>
    <property type="project" value="UniProtKB-KW"/>
</dbReference>
<sequence>MKAGMKLVLVLVIASIALLALATEVAGDCIPQGASCNRLSTIPRRCCFPMVCGWDSSTCVPATINVKP</sequence>